<evidence type="ECO:0000250" key="1">
    <source>
        <dbReference type="UniProtKB" id="Q92925"/>
    </source>
</evidence>
<evidence type="ECO:0000255" key="2">
    <source>
        <dbReference type="PROSITE-ProRule" id="PRU01273"/>
    </source>
</evidence>
<evidence type="ECO:0000256" key="3">
    <source>
        <dbReference type="SAM" id="MobiDB-lite"/>
    </source>
</evidence>
<evidence type="ECO:0000305" key="4"/>
<accession>E1BJD1</accession>
<sequence length="531" mass="58968">MSGRGAGGFPLPPLSPGGGAVAAALGAPPPPAGPGMLPGPALRGPGPAGGVGGPGAAAFRPMGPAGPAAQYQRPGMSPGSRMPMAGLQVGPPAGSPFGTAAPLRPGMPPTMMDPFRKRLLVPQAQPPMPAQRRGLKRRKMADKVLPQRIRELVPESQAYMDLLAFERKLDQTIARKRMEIQEAIKKPLTQKRKLRIYISNTFSPSKAEGDTAGTTGTPGGTPAGDKVASWELRVEGKLLDDPSKQKRKFSSFFKSLVIELDKELYGPDNHLVEWHRMPTTQETDGFQVKRPGDLNVKCTLLLMLDHQPPQYKLDPRLARLLGVHTQTRAAIMQALWLYIKHNQLQDGHEREYINCNRYFRQIFSCGRLRFSEIPMKLAGLLQHPDPIVINHVISVDPNDQKKTACYDIDVEVDDPLKAQMSNFLASTTNQQEIASLDVKIHETIESINQLKTQRDFMLSFSTDPQDFIQEWLRSQRRDLKIITDVIGNPEEERRAAFYHQPWAQEAVGRHIFAKVQQRRQELEQVLGIRLT</sequence>
<feature type="chain" id="PRO_0000404203" description="SWI/SNF-related matrix-associated actin-dependent regulator of chromatin subfamily D member 2">
    <location>
        <begin position="1"/>
        <end position="531"/>
    </location>
</feature>
<feature type="domain" description="SWIB/MDM2" evidence="2">
    <location>
        <begin position="306"/>
        <end position="383"/>
    </location>
</feature>
<feature type="region of interest" description="Disordered" evidence="3">
    <location>
        <begin position="205"/>
        <end position="227"/>
    </location>
</feature>
<feature type="modified residue" description="Asymmetric dimethylarginine" evidence="1">
    <location>
        <position position="81"/>
    </location>
</feature>
<feature type="modified residue" description="Asymmetric dimethylarginine" evidence="1">
    <location>
        <position position="104"/>
    </location>
</feature>
<feature type="modified residue" description="Phosphoserine" evidence="1">
    <location>
        <position position="203"/>
    </location>
</feature>
<feature type="modified residue" description="Phosphothreonine" evidence="1">
    <location>
        <position position="217"/>
    </location>
</feature>
<feature type="cross-link" description="Glycyl lysine isopeptide (Lys-Gly) (interchain with G-Cter in SUMO2)" evidence="1">
    <location>
        <position position="226"/>
    </location>
</feature>
<reference key="1">
    <citation type="journal article" date="2009" name="Science">
        <title>The genome sequence of taurine cattle: a window to ruminant biology and evolution.</title>
        <authorList>
            <consortium name="The bovine genome sequencing and analysis consortium"/>
        </authorList>
    </citation>
    <scope>NUCLEOTIDE SEQUENCE [LARGE SCALE GENOMIC DNA]</scope>
    <source>
        <strain>Hereford</strain>
    </source>
</reference>
<proteinExistence type="inferred from homology"/>
<organism>
    <name type="scientific">Bos taurus</name>
    <name type="common">Bovine</name>
    <dbReference type="NCBI Taxonomy" id="9913"/>
    <lineage>
        <taxon>Eukaryota</taxon>
        <taxon>Metazoa</taxon>
        <taxon>Chordata</taxon>
        <taxon>Craniata</taxon>
        <taxon>Vertebrata</taxon>
        <taxon>Euteleostomi</taxon>
        <taxon>Mammalia</taxon>
        <taxon>Eutheria</taxon>
        <taxon>Laurasiatheria</taxon>
        <taxon>Artiodactyla</taxon>
        <taxon>Ruminantia</taxon>
        <taxon>Pecora</taxon>
        <taxon>Bovidae</taxon>
        <taxon>Bovinae</taxon>
        <taxon>Bos</taxon>
    </lineage>
</organism>
<dbReference type="EMBL" id="AAFC03085035">
    <property type="status" value="NOT_ANNOTATED_CDS"/>
    <property type="molecule type" value="Genomic_DNA"/>
</dbReference>
<dbReference type="RefSeq" id="NP_001192391.1">
    <property type="nucleotide sequence ID" value="NM_001205462.3"/>
</dbReference>
<dbReference type="SMR" id="E1BJD1"/>
<dbReference type="FunCoup" id="E1BJD1">
    <property type="interactions" value="1793"/>
</dbReference>
<dbReference type="STRING" id="9913.ENSBTAP00000028049"/>
<dbReference type="PaxDb" id="9913-ENSBTAP00000028049"/>
<dbReference type="GeneID" id="789613"/>
<dbReference type="KEGG" id="bta:789613"/>
<dbReference type="CTD" id="6603"/>
<dbReference type="VEuPathDB" id="HostDB:ENSBTAG00000021062"/>
<dbReference type="eggNOG" id="KOG2570">
    <property type="taxonomic scope" value="Eukaryota"/>
</dbReference>
<dbReference type="HOGENOM" id="CLU_023529_0_2_1"/>
<dbReference type="InParanoid" id="E1BJD1"/>
<dbReference type="OMA" id="MPTQRRG"/>
<dbReference type="OrthoDB" id="10263741at2759"/>
<dbReference type="TreeFam" id="TF106486"/>
<dbReference type="Reactome" id="R-BTA-3214858">
    <property type="pathway name" value="RMTs methylate histone arginines"/>
</dbReference>
<dbReference type="Reactome" id="R-BTA-8939243">
    <property type="pathway name" value="RUNX1 interacts with co-factors whose precise effect on RUNX1 targets is not known"/>
</dbReference>
<dbReference type="Proteomes" id="UP000009136">
    <property type="component" value="Chromosome 19"/>
</dbReference>
<dbReference type="Bgee" id="ENSBTAG00000021062">
    <property type="expression patterns" value="Expressed in parenchyma of mammary gland and 107 other cell types or tissues"/>
</dbReference>
<dbReference type="GO" id="GO:0005654">
    <property type="term" value="C:nucleoplasm"/>
    <property type="evidence" value="ECO:0007669"/>
    <property type="project" value="UniProtKB-ARBA"/>
</dbReference>
<dbReference type="GO" id="GO:0005634">
    <property type="term" value="C:nucleus"/>
    <property type="evidence" value="ECO:0000318"/>
    <property type="project" value="GO_Central"/>
</dbReference>
<dbReference type="GO" id="GO:0016514">
    <property type="term" value="C:SWI/SNF complex"/>
    <property type="evidence" value="ECO:0000318"/>
    <property type="project" value="GO_Central"/>
</dbReference>
<dbReference type="GO" id="GO:0003712">
    <property type="term" value="F:transcription coregulator activity"/>
    <property type="evidence" value="ECO:0000318"/>
    <property type="project" value="GO_Central"/>
</dbReference>
<dbReference type="GO" id="GO:0006325">
    <property type="term" value="P:chromatin organization"/>
    <property type="evidence" value="ECO:0007669"/>
    <property type="project" value="UniProtKB-KW"/>
</dbReference>
<dbReference type="GO" id="GO:0006357">
    <property type="term" value="P:regulation of transcription by RNA polymerase II"/>
    <property type="evidence" value="ECO:0000318"/>
    <property type="project" value="GO_Central"/>
</dbReference>
<dbReference type="CDD" id="cd17675">
    <property type="entry name" value="SWIB_BAF60B"/>
    <property type="match status" value="1"/>
</dbReference>
<dbReference type="FunFam" id="1.10.245.10:FF:000001">
    <property type="entry name" value="SWI/SNF-related matrix-associated regulator of chromatin subfamily D member 3 isoform 1"/>
    <property type="match status" value="1"/>
</dbReference>
<dbReference type="Gene3D" id="1.10.245.10">
    <property type="entry name" value="SWIB/MDM2 domain"/>
    <property type="match status" value="1"/>
</dbReference>
<dbReference type="InterPro" id="IPR030090">
    <property type="entry name" value="SMARCD2_SWIB_dom"/>
</dbReference>
<dbReference type="InterPro" id="IPR019835">
    <property type="entry name" value="SWIB_domain"/>
</dbReference>
<dbReference type="InterPro" id="IPR036885">
    <property type="entry name" value="SWIB_MDM2_dom_sf"/>
</dbReference>
<dbReference type="InterPro" id="IPR003121">
    <property type="entry name" value="SWIB_MDM2_domain"/>
</dbReference>
<dbReference type="PANTHER" id="PTHR13844">
    <property type="entry name" value="SWI/SNF-RELATED MATRIX-ASSOCIATED ACTIN-DEPENDENT REGULATOR OF CHROMATIN SUBFAMILY D"/>
    <property type="match status" value="1"/>
</dbReference>
<dbReference type="Pfam" id="PF02201">
    <property type="entry name" value="SWIB"/>
    <property type="match status" value="1"/>
</dbReference>
<dbReference type="SMART" id="SM00151">
    <property type="entry name" value="SWIB"/>
    <property type="match status" value="1"/>
</dbReference>
<dbReference type="SUPFAM" id="SSF47592">
    <property type="entry name" value="SWIB/MDM2 domain"/>
    <property type="match status" value="1"/>
</dbReference>
<dbReference type="PROSITE" id="PS51925">
    <property type="entry name" value="SWIB_MDM2"/>
    <property type="match status" value="1"/>
</dbReference>
<comment type="function">
    <text evidence="1">Involved in transcriptional activation and repression of select genes by chromatin remodeling (alteration of DNA-nucleosome topology). Component of SWI/SNF chromatin remodeling complexes that carry out key enzymatic activities, changing chromatin structure by altering DNA-histone contacts within a nucleosome in an ATP-dependent manner. Critical regulator of myeloid differentiation, controlling granulocytopoiesis and the expression of genes involved in neutrophil granule formation.</text>
</comment>
<comment type="subunit">
    <text evidence="1">Component of the multiprotein chromatin-remodeling complexes SWI/SNF: SWI/SNF-A (BAF), SWI/SNF-B (PBAF) and related complexes. The canonical complex contains a catalytic subunit (either SMARCA4/BRG1/BAF190A or SMARCA2/BRM/BAF190B), and at least SMARCE1, ACTL6A/BAF53, SMARCC1/BAF155, SMARCC2/BAF170, and SMARCB1/SNF5/BAF47. Other subunits specific to each of the complexes may also be present permitting several possible combinations developmentally and tissue specific. Component of the BAF complex, which includes at least actin (ACTB), ARID1A/BAF250A, ARID1B/BAF250B, SMARCA2/BRM, SMARCA4/BRG1, ACTL6A/BAF53, ACTL6B/BAF53B, SMARCE1/BAF57, SMARCC1/BAF155, SMARCC2/BAF170, SMARCB1/SNF5/INI1, and one or more SMARCD1/BAF60A, SMARCD2/BAF60B, or SMARCD3/BAF60C. In muscle cells, the BAF complex also contains DPF3. Component of the SWI/SNF-B (PBAF) chromatin remodeling complex, at least composed of SMARCA4/BRG1, SMARCB1/BAF47/SNF5, ACTL6A/BAF53A or ACTL6B/BAF53B, SMARCE1/BAF57, SMARCD1/BAF60A, SMARCD2/BAF60B, perhaps SMARCD3/BAF60C, SMARCC1/BAF155, SMARCC2/BAF170, PBRM1/BAF180, ARID2/BAF200 and actin (ACTB). Interacts with UNKL. Interacts with CEBPE.</text>
</comment>
<comment type="subcellular location">
    <subcellularLocation>
        <location evidence="1">Nucleus</location>
    </subcellularLocation>
</comment>
<comment type="PTM">
    <text evidence="1">Ubiquitinated through a signaling process involving RAC1 and the RING finger protein UNKL.</text>
</comment>
<comment type="similarity">
    <text evidence="4">Belongs to the SMARCD family.</text>
</comment>
<gene>
    <name type="primary">SMARCD2</name>
</gene>
<keyword id="KW-0156">Chromatin regulator</keyword>
<keyword id="KW-1017">Isopeptide bond</keyword>
<keyword id="KW-0488">Methylation</keyword>
<keyword id="KW-0539">Nucleus</keyword>
<keyword id="KW-0597">Phosphoprotein</keyword>
<keyword id="KW-1185">Reference proteome</keyword>
<keyword id="KW-0804">Transcription</keyword>
<keyword id="KW-0805">Transcription regulation</keyword>
<keyword id="KW-0832">Ubl conjugation</keyword>
<name>SMRD2_BOVIN</name>
<protein>
    <recommendedName>
        <fullName>SWI/SNF-related matrix-associated actin-dependent regulator of chromatin subfamily D member 2</fullName>
    </recommendedName>
    <alternativeName>
        <fullName>60 kDa BRG-1/Brm-associated factor subunit B</fullName>
    </alternativeName>
    <alternativeName>
        <fullName>BRG1-associated factor 60B</fullName>
        <shortName>BAF60B</shortName>
    </alternativeName>
</protein>